<protein>
    <recommendedName>
        <fullName>Restriction of telomere capping protein 5</fullName>
    </recommendedName>
</protein>
<comment type="function">
    <text evidence="1">May be involved in a process influencing telomere capping.</text>
</comment>
<comment type="subcellular location">
    <subcellularLocation>
        <location evidence="1">Cytoplasm</location>
    </subcellularLocation>
</comment>
<comment type="similarity">
    <text evidence="4">Belongs to the RTC5 family.</text>
</comment>
<reference key="1">
    <citation type="journal article" date="2005" name="Nature">
        <title>Sequencing of Aspergillus nidulans and comparative analysis with A. fumigatus and A. oryzae.</title>
        <authorList>
            <person name="Galagan J.E."/>
            <person name="Calvo S.E."/>
            <person name="Cuomo C."/>
            <person name="Ma L.-J."/>
            <person name="Wortman J.R."/>
            <person name="Batzoglou S."/>
            <person name="Lee S.-I."/>
            <person name="Bastuerkmen M."/>
            <person name="Spevak C.C."/>
            <person name="Clutterbuck J."/>
            <person name="Kapitonov V."/>
            <person name="Jurka J."/>
            <person name="Scazzocchio C."/>
            <person name="Farman M.L."/>
            <person name="Butler J."/>
            <person name="Purcell S."/>
            <person name="Harris S."/>
            <person name="Braus G.H."/>
            <person name="Draht O."/>
            <person name="Busch S."/>
            <person name="D'Enfert C."/>
            <person name="Bouchier C."/>
            <person name="Goldman G.H."/>
            <person name="Bell-Pedersen D."/>
            <person name="Griffiths-Jones S."/>
            <person name="Doonan J.H."/>
            <person name="Yu J."/>
            <person name="Vienken K."/>
            <person name="Pain A."/>
            <person name="Freitag M."/>
            <person name="Selker E.U."/>
            <person name="Archer D.B."/>
            <person name="Penalva M.A."/>
            <person name="Oakley B.R."/>
            <person name="Momany M."/>
            <person name="Tanaka T."/>
            <person name="Kumagai T."/>
            <person name="Asai K."/>
            <person name="Machida M."/>
            <person name="Nierman W.C."/>
            <person name="Denning D.W."/>
            <person name="Caddick M.X."/>
            <person name="Hynes M."/>
            <person name="Paoletti M."/>
            <person name="Fischer R."/>
            <person name="Miller B.L."/>
            <person name="Dyer P.S."/>
            <person name="Sachs M.S."/>
            <person name="Osmani S.A."/>
            <person name="Birren B.W."/>
        </authorList>
    </citation>
    <scope>NUCLEOTIDE SEQUENCE [LARGE SCALE GENOMIC DNA]</scope>
    <source>
        <strain>FGSC A4 / ATCC 38163 / CBS 112.46 / NRRL 194 / M139</strain>
    </source>
</reference>
<reference key="2">
    <citation type="journal article" date="2009" name="Fungal Genet. Biol.">
        <title>The 2008 update of the Aspergillus nidulans genome annotation: a community effort.</title>
        <authorList>
            <person name="Wortman J.R."/>
            <person name="Gilsenan J.M."/>
            <person name="Joardar V."/>
            <person name="Deegan J."/>
            <person name="Clutterbuck J."/>
            <person name="Andersen M.R."/>
            <person name="Archer D."/>
            <person name="Bencina M."/>
            <person name="Braus G."/>
            <person name="Coutinho P."/>
            <person name="von Dohren H."/>
            <person name="Doonan J."/>
            <person name="Driessen A.J."/>
            <person name="Durek P."/>
            <person name="Espeso E."/>
            <person name="Fekete E."/>
            <person name="Flipphi M."/>
            <person name="Estrada C.G."/>
            <person name="Geysens S."/>
            <person name="Goldman G."/>
            <person name="de Groot P.W."/>
            <person name="Hansen K."/>
            <person name="Harris S.D."/>
            <person name="Heinekamp T."/>
            <person name="Helmstaedt K."/>
            <person name="Henrissat B."/>
            <person name="Hofmann G."/>
            <person name="Homan T."/>
            <person name="Horio T."/>
            <person name="Horiuchi H."/>
            <person name="James S."/>
            <person name="Jones M."/>
            <person name="Karaffa L."/>
            <person name="Karanyi Z."/>
            <person name="Kato M."/>
            <person name="Keller N."/>
            <person name="Kelly D.E."/>
            <person name="Kiel J.A."/>
            <person name="Kim J.M."/>
            <person name="van der Klei I.J."/>
            <person name="Klis F.M."/>
            <person name="Kovalchuk A."/>
            <person name="Krasevec N."/>
            <person name="Kubicek C.P."/>
            <person name="Liu B."/>
            <person name="Maccabe A."/>
            <person name="Meyer V."/>
            <person name="Mirabito P."/>
            <person name="Miskei M."/>
            <person name="Mos M."/>
            <person name="Mullins J."/>
            <person name="Nelson D.R."/>
            <person name="Nielsen J."/>
            <person name="Oakley B.R."/>
            <person name="Osmani S.A."/>
            <person name="Pakula T."/>
            <person name="Paszewski A."/>
            <person name="Paulsen I."/>
            <person name="Pilsyk S."/>
            <person name="Pocsi I."/>
            <person name="Punt P.J."/>
            <person name="Ram A.F."/>
            <person name="Ren Q."/>
            <person name="Robellet X."/>
            <person name="Robson G."/>
            <person name="Seiboth B."/>
            <person name="van Solingen P."/>
            <person name="Specht T."/>
            <person name="Sun J."/>
            <person name="Taheri-Talesh N."/>
            <person name="Takeshita N."/>
            <person name="Ussery D."/>
            <person name="vanKuyk P.A."/>
            <person name="Visser H."/>
            <person name="van de Vondervoort P.J."/>
            <person name="de Vries R.P."/>
            <person name="Walton J."/>
            <person name="Xiang X."/>
            <person name="Xiong Y."/>
            <person name="Zeng A.P."/>
            <person name="Brandt B.W."/>
            <person name="Cornell M.J."/>
            <person name="van den Hondel C.A."/>
            <person name="Visser J."/>
            <person name="Oliver S.G."/>
            <person name="Turner G."/>
        </authorList>
    </citation>
    <scope>GENOME REANNOTATION</scope>
    <source>
        <strain>FGSC A4 / ATCC 38163 / CBS 112.46 / NRRL 194 / M139</strain>
    </source>
</reference>
<dbReference type="EMBL" id="AACD01000062">
    <property type="protein sequence ID" value="EAA59103.1"/>
    <property type="molecule type" value="Genomic_DNA"/>
</dbReference>
<dbReference type="EMBL" id="BN001302">
    <property type="protein sequence ID" value="CBF75269.1"/>
    <property type="molecule type" value="Genomic_DNA"/>
</dbReference>
<dbReference type="RefSeq" id="XP_661442.1">
    <property type="nucleotide sequence ID" value="XM_656350.1"/>
</dbReference>
<dbReference type="SMR" id="Q5B6J2"/>
<dbReference type="STRING" id="227321.Q5B6J2"/>
<dbReference type="EnsemblFungi" id="CBF75269">
    <property type="protein sequence ID" value="CBF75269"/>
    <property type="gene ID" value="ANIA_03838"/>
</dbReference>
<dbReference type="KEGG" id="ani:ANIA_03838"/>
<dbReference type="eggNOG" id="ENOG502QV3R">
    <property type="taxonomic scope" value="Eukaryota"/>
</dbReference>
<dbReference type="HOGENOM" id="CLU_011918_1_0_1"/>
<dbReference type="InParanoid" id="Q5B6J2"/>
<dbReference type="OMA" id="KWEFEAR"/>
<dbReference type="OrthoDB" id="289228at2759"/>
<dbReference type="Proteomes" id="UP000000560">
    <property type="component" value="Chromosome II"/>
</dbReference>
<dbReference type="GO" id="GO:0005737">
    <property type="term" value="C:cytoplasm"/>
    <property type="evidence" value="ECO:0007669"/>
    <property type="project" value="UniProtKB-SubCell"/>
</dbReference>
<dbReference type="GO" id="GO:0005634">
    <property type="term" value="C:nucleus"/>
    <property type="evidence" value="ECO:0000318"/>
    <property type="project" value="GO_Central"/>
</dbReference>
<dbReference type="GO" id="GO:0006979">
    <property type="term" value="P:response to oxidative stress"/>
    <property type="evidence" value="ECO:0000318"/>
    <property type="project" value="GO_Central"/>
</dbReference>
<dbReference type="InterPro" id="IPR006571">
    <property type="entry name" value="TLDc_dom"/>
</dbReference>
<dbReference type="Pfam" id="PF07534">
    <property type="entry name" value="TLD"/>
    <property type="match status" value="1"/>
</dbReference>
<dbReference type="PROSITE" id="PS51886">
    <property type="entry name" value="TLDC"/>
    <property type="match status" value="1"/>
</dbReference>
<feature type="chain" id="PRO_0000408825" description="Restriction of telomere capping protein 5">
    <location>
        <begin position="1"/>
        <end position="653"/>
    </location>
</feature>
<feature type="domain" description="TLDc" evidence="2">
    <location>
        <begin position="361"/>
        <end position="572"/>
    </location>
</feature>
<feature type="region of interest" description="Disordered" evidence="3">
    <location>
        <begin position="1"/>
        <end position="28"/>
    </location>
</feature>
<feature type="region of interest" description="Disordered" evidence="3">
    <location>
        <begin position="165"/>
        <end position="194"/>
    </location>
</feature>
<feature type="compositionally biased region" description="Basic and acidic residues" evidence="3">
    <location>
        <begin position="1"/>
        <end position="10"/>
    </location>
</feature>
<feature type="compositionally biased region" description="Polar residues" evidence="3">
    <location>
        <begin position="15"/>
        <end position="26"/>
    </location>
</feature>
<keyword id="KW-0963">Cytoplasm</keyword>
<keyword id="KW-1185">Reference proteome</keyword>
<proteinExistence type="inferred from homology"/>
<sequence>MGVGQSHEDAGYTSPDLTPNLFPSSKNKSDADAEQLSLKLAERFATKCFTPLELTHFKDNFYQRATEQGGLKYWNEKTLSDFLSIPDHSDSHCPLDAGPVIFRMASYLGAFPFQNSLAPSVLTLEALIKVVVLLTERYGKVLRRGQKNRIRLLFGSLADVARKEIEKPAENEGKEEDIPAPSQTRGFDIDAPANDNYDEDDEDDLALAALESLDAIEVFKHDSRIDKRVYEARISLSTFRRLLMLLLVIAPLKPLEDISNYTVDLNETRMLSVREEADSILAAFEQEASGGISYKTFADTITSSFPYLFDPLTPLFEHLLFSKNLDFSQHRGSDTTEAEQMSQPVKSSLASITLPGSFESTILSPSIISHLSFFLPSTSDNQNLLHGNVRLHPVFSIAAHGSSLTSFSHNVLTWQSGTLFLLYGQDTDTGDMLTLGAYLPQPWKSPTTSQSTSDFSSSVLPCLFLLSPYHILLRGNPSPSVVDKPNTPTAYFSTHHGIAIGCRIPPSSRTQKLPPTPLGAGSLVIGTSLESAELHISPFGHDGVFLPPGAQPTKSKSETNIDIYNLEVWGLVPGSNPNGSSSLQKSAVELQQASWDFEAREAERRRHVNLSAGAGDSALEQARWLLETAGVIGDSSGTGRCSRQYGVVTMCYQ</sequence>
<organism>
    <name type="scientific">Emericella nidulans (strain FGSC A4 / ATCC 38163 / CBS 112.46 / NRRL 194 / M139)</name>
    <name type="common">Aspergillus nidulans</name>
    <dbReference type="NCBI Taxonomy" id="227321"/>
    <lineage>
        <taxon>Eukaryota</taxon>
        <taxon>Fungi</taxon>
        <taxon>Dikarya</taxon>
        <taxon>Ascomycota</taxon>
        <taxon>Pezizomycotina</taxon>
        <taxon>Eurotiomycetes</taxon>
        <taxon>Eurotiomycetidae</taxon>
        <taxon>Eurotiales</taxon>
        <taxon>Aspergillaceae</taxon>
        <taxon>Aspergillus</taxon>
        <taxon>Aspergillus subgen. Nidulantes</taxon>
    </lineage>
</organism>
<name>RTC5_EMENI</name>
<evidence type="ECO:0000250" key="1"/>
<evidence type="ECO:0000255" key="2">
    <source>
        <dbReference type="PROSITE-ProRule" id="PRU01234"/>
    </source>
</evidence>
<evidence type="ECO:0000256" key="3">
    <source>
        <dbReference type="SAM" id="MobiDB-lite"/>
    </source>
</evidence>
<evidence type="ECO:0000305" key="4"/>
<gene>
    <name type="primary">rtc5</name>
    <name type="ORF">AN3838</name>
</gene>
<accession>Q5B6J2</accession>
<accession>C8V6J5</accession>